<dbReference type="EC" id="2.1.1.189" evidence="1"/>
<dbReference type="EMBL" id="AE017220">
    <property type="protein sequence ID" value="AAX64781.1"/>
    <property type="molecule type" value="Genomic_DNA"/>
</dbReference>
<dbReference type="RefSeq" id="WP_001149779.1">
    <property type="nucleotide sequence ID" value="NC_006905.1"/>
</dbReference>
<dbReference type="SMR" id="Q57R80"/>
<dbReference type="KEGG" id="sec:SCH_0875"/>
<dbReference type="HOGENOM" id="CLU_014689_0_0_6"/>
<dbReference type="Proteomes" id="UP000000538">
    <property type="component" value="Chromosome"/>
</dbReference>
<dbReference type="GO" id="GO:0051539">
    <property type="term" value="F:4 iron, 4 sulfur cluster binding"/>
    <property type="evidence" value="ECO:0007669"/>
    <property type="project" value="UniProtKB-KW"/>
</dbReference>
<dbReference type="GO" id="GO:0005506">
    <property type="term" value="F:iron ion binding"/>
    <property type="evidence" value="ECO:0007669"/>
    <property type="project" value="UniProtKB-UniRule"/>
</dbReference>
<dbReference type="GO" id="GO:0070041">
    <property type="term" value="F:rRNA (uridine-C5-)-methyltransferase activity"/>
    <property type="evidence" value="ECO:0007669"/>
    <property type="project" value="UniProtKB-UniRule"/>
</dbReference>
<dbReference type="GO" id="GO:0070475">
    <property type="term" value="P:rRNA base methylation"/>
    <property type="evidence" value="ECO:0007669"/>
    <property type="project" value="TreeGrafter"/>
</dbReference>
<dbReference type="CDD" id="cd02440">
    <property type="entry name" value="AdoMet_MTases"/>
    <property type="match status" value="1"/>
</dbReference>
<dbReference type="FunFam" id="2.40.50.1070:FF:000002">
    <property type="entry name" value="23S rRNA (uracil(747)-C(5))-methyltransferase RlmC"/>
    <property type="match status" value="1"/>
</dbReference>
<dbReference type="FunFam" id="3.40.50.150:FF:000049">
    <property type="entry name" value="23S rRNA (uracil(747)-C(5))-methyltransferase RlmC"/>
    <property type="match status" value="1"/>
</dbReference>
<dbReference type="Gene3D" id="2.40.50.1070">
    <property type="match status" value="1"/>
</dbReference>
<dbReference type="Gene3D" id="3.40.50.150">
    <property type="entry name" value="Vaccinia Virus protein VP39"/>
    <property type="match status" value="1"/>
</dbReference>
<dbReference type="HAMAP" id="MF_01012">
    <property type="entry name" value="23SrRNA_methyltr_RlmC"/>
    <property type="match status" value="1"/>
</dbReference>
<dbReference type="InterPro" id="IPR011825">
    <property type="entry name" value="23SrRNA_MeTrfase_RlmC"/>
</dbReference>
<dbReference type="InterPro" id="IPR030390">
    <property type="entry name" value="MeTrfase_TrmA_AS"/>
</dbReference>
<dbReference type="InterPro" id="IPR030391">
    <property type="entry name" value="MeTrfase_TrmA_CS"/>
</dbReference>
<dbReference type="InterPro" id="IPR029063">
    <property type="entry name" value="SAM-dependent_MTases_sf"/>
</dbReference>
<dbReference type="InterPro" id="IPR010280">
    <property type="entry name" value="U5_MeTrfase_fam"/>
</dbReference>
<dbReference type="NCBIfam" id="TIGR02085">
    <property type="entry name" value="meth_trns_rumB"/>
    <property type="match status" value="1"/>
</dbReference>
<dbReference type="PANTHER" id="PTHR11061">
    <property type="entry name" value="RNA M5U METHYLTRANSFERASE"/>
    <property type="match status" value="1"/>
</dbReference>
<dbReference type="PANTHER" id="PTHR11061:SF30">
    <property type="entry name" value="TRNA (URACIL(54)-C(5))-METHYLTRANSFERASE"/>
    <property type="match status" value="1"/>
</dbReference>
<dbReference type="Pfam" id="PF05958">
    <property type="entry name" value="tRNA_U5-meth_tr"/>
    <property type="match status" value="1"/>
</dbReference>
<dbReference type="SUPFAM" id="SSF53335">
    <property type="entry name" value="S-adenosyl-L-methionine-dependent methyltransferases"/>
    <property type="match status" value="1"/>
</dbReference>
<dbReference type="PROSITE" id="PS51687">
    <property type="entry name" value="SAM_MT_RNA_M5U"/>
    <property type="match status" value="1"/>
</dbReference>
<dbReference type="PROSITE" id="PS01230">
    <property type="entry name" value="TRMA_1"/>
    <property type="match status" value="1"/>
</dbReference>
<dbReference type="PROSITE" id="PS01231">
    <property type="entry name" value="TRMA_2"/>
    <property type="match status" value="1"/>
</dbReference>
<feature type="chain" id="PRO_0000282010" description="23S rRNA (uracil(747)-C(5))-methyltransferase RlmC">
    <location>
        <begin position="1"/>
        <end position="376"/>
    </location>
</feature>
<feature type="active site" description="Nucleophile" evidence="1">
    <location>
        <position position="334"/>
    </location>
</feature>
<feature type="binding site" evidence="1">
    <location>
        <position position="3"/>
    </location>
    <ligand>
        <name>[4Fe-4S] cluster</name>
        <dbReference type="ChEBI" id="CHEBI:49883"/>
    </ligand>
</feature>
<feature type="binding site" evidence="1">
    <location>
        <position position="11"/>
    </location>
    <ligand>
        <name>[4Fe-4S] cluster</name>
        <dbReference type="ChEBI" id="CHEBI:49883"/>
    </ligand>
</feature>
<feature type="binding site" evidence="1">
    <location>
        <position position="14"/>
    </location>
    <ligand>
        <name>[4Fe-4S] cluster</name>
        <dbReference type="ChEBI" id="CHEBI:49883"/>
    </ligand>
</feature>
<feature type="binding site" evidence="1">
    <location>
        <position position="87"/>
    </location>
    <ligand>
        <name>[4Fe-4S] cluster</name>
        <dbReference type="ChEBI" id="CHEBI:49883"/>
    </ligand>
</feature>
<feature type="binding site" evidence="1">
    <location>
        <position position="212"/>
    </location>
    <ligand>
        <name>S-adenosyl-L-methionine</name>
        <dbReference type="ChEBI" id="CHEBI:59789"/>
    </ligand>
</feature>
<feature type="binding site" evidence="1">
    <location>
        <position position="241"/>
    </location>
    <ligand>
        <name>S-adenosyl-L-methionine</name>
        <dbReference type="ChEBI" id="CHEBI:59789"/>
    </ligand>
</feature>
<feature type="binding site" evidence="1">
    <location>
        <position position="262"/>
    </location>
    <ligand>
        <name>S-adenosyl-L-methionine</name>
        <dbReference type="ChEBI" id="CHEBI:59789"/>
    </ligand>
</feature>
<feature type="binding site" evidence="1">
    <location>
        <position position="307"/>
    </location>
    <ligand>
        <name>S-adenosyl-L-methionine</name>
        <dbReference type="ChEBI" id="CHEBI:59789"/>
    </ligand>
</feature>
<evidence type="ECO:0000255" key="1">
    <source>
        <dbReference type="HAMAP-Rule" id="MF_01012"/>
    </source>
</evidence>
<gene>
    <name evidence="1" type="primary">rlmC</name>
    <name type="synonym">rumB</name>
    <name type="ordered locus">SCH_0875</name>
</gene>
<protein>
    <recommendedName>
        <fullName evidence="1">23S rRNA (uracil(747)-C(5))-methyltransferase RlmC</fullName>
        <ecNumber evidence="1">2.1.1.189</ecNumber>
    </recommendedName>
    <alternativeName>
        <fullName evidence="1">23S rRNA(m5U747)-methyltransferase</fullName>
    </alternativeName>
</protein>
<organism>
    <name type="scientific">Salmonella choleraesuis (strain SC-B67)</name>
    <dbReference type="NCBI Taxonomy" id="321314"/>
    <lineage>
        <taxon>Bacteria</taxon>
        <taxon>Pseudomonadati</taxon>
        <taxon>Pseudomonadota</taxon>
        <taxon>Gammaproteobacteria</taxon>
        <taxon>Enterobacterales</taxon>
        <taxon>Enterobacteriaceae</taxon>
        <taxon>Salmonella</taxon>
    </lineage>
</organism>
<reference key="1">
    <citation type="journal article" date="2005" name="Nucleic Acids Res.">
        <title>The genome sequence of Salmonella enterica serovar Choleraesuis, a highly invasive and resistant zoonotic pathogen.</title>
        <authorList>
            <person name="Chiu C.-H."/>
            <person name="Tang P."/>
            <person name="Chu C."/>
            <person name="Hu S."/>
            <person name="Bao Q."/>
            <person name="Yu J."/>
            <person name="Chou Y.-Y."/>
            <person name="Wang H.-S."/>
            <person name="Lee Y.-S."/>
        </authorList>
    </citation>
    <scope>NUCLEOTIDE SEQUENCE [LARGE SCALE GENOMIC DNA]</scope>
    <source>
        <strain>SC-B67</strain>
    </source>
</reference>
<sequence>MQCALYDAGRCRSCQWITQSVNEQLSAKTADLHRLLAGLPVEQWCAPIGGPEQHFRNKAKMVVSGSVEKPLFGMLHRDGTPVDLCGCPLYPASFAPVFSALKPFIARAGLTPYNVARKRGELKYLLLTESQFDGGMMLRFVLRSETKLTQLRAALPWLRAQLPQLRVITANIQPVHMAIMEGETEIYLTDQQALVERFNDVPLWIRPQSFFQTNPTVASRLYATARDWVGQLPVRHMWDLFCGVGGFGLHCATPQMQLTGIEIAPEAIACAKQSAAELGLTRLHFQALDSTQFAIAQGETPDLVLVNPPRRGIGKPLCDYLAQMAPRFIIYSSCNAQTMAQDIRHLPNYRIQRVQLFDMFPHTAHYEVLALLRRSI</sequence>
<accession>Q57R80</accession>
<proteinExistence type="inferred from homology"/>
<keyword id="KW-0004">4Fe-4S</keyword>
<keyword id="KW-0408">Iron</keyword>
<keyword id="KW-0411">Iron-sulfur</keyword>
<keyword id="KW-0479">Metal-binding</keyword>
<keyword id="KW-0489">Methyltransferase</keyword>
<keyword id="KW-0698">rRNA processing</keyword>
<keyword id="KW-0949">S-adenosyl-L-methionine</keyword>
<keyword id="KW-0808">Transferase</keyword>
<name>RLMC_SALCH</name>
<comment type="function">
    <text evidence="1">Catalyzes the formation of 5-methyl-uridine at position 747 (m5U747) in 23S rRNA.</text>
</comment>
<comment type="catalytic activity">
    <reaction evidence="1">
        <text>uridine(747) in 23S rRNA + S-adenosyl-L-methionine = 5-methyluridine(747) in 23S rRNA + S-adenosyl-L-homocysteine + H(+)</text>
        <dbReference type="Rhea" id="RHEA:42628"/>
        <dbReference type="Rhea" id="RHEA-COMP:10154"/>
        <dbReference type="Rhea" id="RHEA-COMP:10155"/>
        <dbReference type="ChEBI" id="CHEBI:15378"/>
        <dbReference type="ChEBI" id="CHEBI:57856"/>
        <dbReference type="ChEBI" id="CHEBI:59789"/>
        <dbReference type="ChEBI" id="CHEBI:65315"/>
        <dbReference type="ChEBI" id="CHEBI:74447"/>
        <dbReference type="EC" id="2.1.1.189"/>
    </reaction>
</comment>
<comment type="similarity">
    <text evidence="1">Belongs to the class I-like SAM-binding methyltransferase superfamily. RNA M5U methyltransferase family. RlmC subfamily.</text>
</comment>